<comment type="function">
    <text evidence="1">Catalyzes the reversible conversion of 3-phosphohydroxypyruvate to phosphoserine and of 3-hydroxy-2-oxo-4-phosphonooxybutanoate to phosphohydroxythreonine.</text>
</comment>
<comment type="catalytic activity">
    <reaction evidence="1">
        <text>O-phospho-L-serine + 2-oxoglutarate = 3-phosphooxypyruvate + L-glutamate</text>
        <dbReference type="Rhea" id="RHEA:14329"/>
        <dbReference type="ChEBI" id="CHEBI:16810"/>
        <dbReference type="ChEBI" id="CHEBI:18110"/>
        <dbReference type="ChEBI" id="CHEBI:29985"/>
        <dbReference type="ChEBI" id="CHEBI:57524"/>
        <dbReference type="EC" id="2.6.1.52"/>
    </reaction>
</comment>
<comment type="catalytic activity">
    <reaction evidence="1">
        <text>4-(phosphooxy)-L-threonine + 2-oxoglutarate = (R)-3-hydroxy-2-oxo-4-phosphooxybutanoate + L-glutamate</text>
        <dbReference type="Rhea" id="RHEA:16573"/>
        <dbReference type="ChEBI" id="CHEBI:16810"/>
        <dbReference type="ChEBI" id="CHEBI:29985"/>
        <dbReference type="ChEBI" id="CHEBI:58452"/>
        <dbReference type="ChEBI" id="CHEBI:58538"/>
        <dbReference type="EC" id="2.6.1.52"/>
    </reaction>
</comment>
<comment type="cofactor">
    <cofactor evidence="1">
        <name>pyridoxal 5'-phosphate</name>
        <dbReference type="ChEBI" id="CHEBI:597326"/>
    </cofactor>
    <text evidence="1">Binds 1 pyridoxal phosphate per subunit.</text>
</comment>
<comment type="pathway">
    <text evidence="1">Amino-acid biosynthesis; L-serine biosynthesis; L-serine from 3-phospho-D-glycerate: step 2/3.</text>
</comment>
<comment type="pathway">
    <text evidence="1">Cofactor biosynthesis; pyridoxine 5'-phosphate biosynthesis; pyridoxine 5'-phosphate from D-erythrose 4-phosphate: step 3/5.</text>
</comment>
<comment type="subunit">
    <text evidence="1">Homodimer.</text>
</comment>
<comment type="subcellular location">
    <subcellularLocation>
        <location evidence="1">Cytoplasm</location>
    </subcellularLocation>
</comment>
<comment type="similarity">
    <text evidence="1">Belongs to the class-V pyridoxal-phosphate-dependent aminotransferase family. SerC subfamily.</text>
</comment>
<sequence length="358" mass="40486">MRKINFSAGPSTLPLEILEQAQKELCDYQGRGYSIMEISHRTKVFEEVHFGAQEKAKKLYELNDDYEVLFLQGGASLQFAMIPMNLALNGVCEYANTGVWTKKAIKEAQILGVNVKTVASSEESNFDHIPRVEFSDNADYAYICSNNTIYGTQYQNYPKTKTPLIVDASSDFFSRKVDFSNIALFYGGVQKNAGISGLSCIFIRKDMLERSKNKQIPSMLNYLTHAENQSLFNTPPTFAIYMFNLEMDWLLNQGGLDKVHEKNSQKATMLYECIDLSNGFYKGHADKKDRSLMNVSFNIAKNKDLEPLFVKEAEEAGMIGLKGHRILGGIRASIYNALNLDQVKTLCEFMKEFQGKYA</sequence>
<reference key="1">
    <citation type="journal article" date="2000" name="Nature">
        <title>The genome sequence of the food-borne pathogen Campylobacter jejuni reveals hypervariable sequences.</title>
        <authorList>
            <person name="Parkhill J."/>
            <person name="Wren B.W."/>
            <person name="Mungall K.L."/>
            <person name="Ketley J.M."/>
            <person name="Churcher C.M."/>
            <person name="Basham D."/>
            <person name="Chillingworth T."/>
            <person name="Davies R.M."/>
            <person name="Feltwell T."/>
            <person name="Holroyd S."/>
            <person name="Jagels K."/>
            <person name="Karlyshev A.V."/>
            <person name="Moule S."/>
            <person name="Pallen M.J."/>
            <person name="Penn C.W."/>
            <person name="Quail M.A."/>
            <person name="Rajandream M.A."/>
            <person name="Rutherford K.M."/>
            <person name="van Vliet A.H.M."/>
            <person name="Whitehead S."/>
            <person name="Barrell B.G."/>
        </authorList>
    </citation>
    <scope>NUCLEOTIDE SEQUENCE [LARGE SCALE GENOMIC DNA]</scope>
    <source>
        <strain>ATCC 700819 / NCTC 11168</strain>
    </source>
</reference>
<proteinExistence type="evidence at protein level"/>
<dbReference type="EC" id="2.6.1.52" evidence="1"/>
<dbReference type="EMBL" id="AL111168">
    <property type="protein sequence ID" value="CAL34477.1"/>
    <property type="molecule type" value="Genomic_DNA"/>
</dbReference>
<dbReference type="PIR" id="B81452">
    <property type="entry name" value="B81452"/>
</dbReference>
<dbReference type="RefSeq" id="WP_002858670.1">
    <property type="nucleotide sequence ID" value="NZ_SZUC01000004.1"/>
</dbReference>
<dbReference type="RefSeq" id="YP_002343764.1">
    <property type="nucleotide sequence ID" value="NC_002163.1"/>
</dbReference>
<dbReference type="PDB" id="3M5U">
    <property type="method" value="X-ray"/>
    <property type="resolution" value="2.15 A"/>
    <property type="chains" value="A/B=1-358"/>
</dbReference>
<dbReference type="PDBsum" id="3M5U"/>
<dbReference type="SMR" id="Q9PIH3"/>
<dbReference type="IntAct" id="Q9PIH3">
    <property type="interactions" value="19"/>
</dbReference>
<dbReference type="STRING" id="192222.Cj0326"/>
<dbReference type="PaxDb" id="192222-Cj0326"/>
<dbReference type="EnsemblBacteria" id="CAL34477">
    <property type="protein sequence ID" value="CAL34477"/>
    <property type="gene ID" value="Cj0326"/>
</dbReference>
<dbReference type="GeneID" id="904650"/>
<dbReference type="KEGG" id="cje:Cj0326"/>
<dbReference type="PATRIC" id="fig|192222.6.peg.318"/>
<dbReference type="eggNOG" id="COG1932">
    <property type="taxonomic scope" value="Bacteria"/>
</dbReference>
<dbReference type="HOGENOM" id="CLU_034866_0_2_7"/>
<dbReference type="OrthoDB" id="9809412at2"/>
<dbReference type="UniPathway" id="UPA00135">
    <property type="reaction ID" value="UER00197"/>
</dbReference>
<dbReference type="UniPathway" id="UPA00244">
    <property type="reaction ID" value="UER00311"/>
</dbReference>
<dbReference type="EvolutionaryTrace" id="Q9PIH3"/>
<dbReference type="Proteomes" id="UP000000799">
    <property type="component" value="Chromosome"/>
</dbReference>
<dbReference type="GO" id="GO:0005737">
    <property type="term" value="C:cytoplasm"/>
    <property type="evidence" value="ECO:0007669"/>
    <property type="project" value="UniProtKB-SubCell"/>
</dbReference>
<dbReference type="GO" id="GO:0004648">
    <property type="term" value="F:O-phospho-L-serine:2-oxoglutarate aminotransferase activity"/>
    <property type="evidence" value="ECO:0007669"/>
    <property type="project" value="UniProtKB-UniRule"/>
</dbReference>
<dbReference type="GO" id="GO:0030170">
    <property type="term" value="F:pyridoxal phosphate binding"/>
    <property type="evidence" value="ECO:0007669"/>
    <property type="project" value="UniProtKB-UniRule"/>
</dbReference>
<dbReference type="GO" id="GO:0006564">
    <property type="term" value="P:L-serine biosynthetic process"/>
    <property type="evidence" value="ECO:0007669"/>
    <property type="project" value="UniProtKB-UniRule"/>
</dbReference>
<dbReference type="GO" id="GO:0008615">
    <property type="term" value="P:pyridoxine biosynthetic process"/>
    <property type="evidence" value="ECO:0007669"/>
    <property type="project" value="UniProtKB-UniRule"/>
</dbReference>
<dbReference type="CDD" id="cd00611">
    <property type="entry name" value="PSAT_like"/>
    <property type="match status" value="1"/>
</dbReference>
<dbReference type="FunFam" id="3.40.640.10:FF:000010">
    <property type="entry name" value="Phosphoserine aminotransferase"/>
    <property type="match status" value="1"/>
</dbReference>
<dbReference type="FunFam" id="3.90.1150.10:FF:000006">
    <property type="entry name" value="Phosphoserine aminotransferase"/>
    <property type="match status" value="1"/>
</dbReference>
<dbReference type="Gene3D" id="3.90.1150.10">
    <property type="entry name" value="Aspartate Aminotransferase, domain 1"/>
    <property type="match status" value="1"/>
</dbReference>
<dbReference type="Gene3D" id="3.40.640.10">
    <property type="entry name" value="Type I PLP-dependent aspartate aminotransferase-like (Major domain)"/>
    <property type="match status" value="1"/>
</dbReference>
<dbReference type="HAMAP" id="MF_00160">
    <property type="entry name" value="SerC_aminotrans_5"/>
    <property type="match status" value="1"/>
</dbReference>
<dbReference type="InterPro" id="IPR000192">
    <property type="entry name" value="Aminotrans_V_dom"/>
</dbReference>
<dbReference type="InterPro" id="IPR022278">
    <property type="entry name" value="Pser_aminoTfrase"/>
</dbReference>
<dbReference type="InterPro" id="IPR015424">
    <property type="entry name" value="PyrdxlP-dep_Trfase"/>
</dbReference>
<dbReference type="InterPro" id="IPR015421">
    <property type="entry name" value="PyrdxlP-dep_Trfase_major"/>
</dbReference>
<dbReference type="InterPro" id="IPR015422">
    <property type="entry name" value="PyrdxlP-dep_Trfase_small"/>
</dbReference>
<dbReference type="NCBIfam" id="NF003764">
    <property type="entry name" value="PRK05355.1"/>
    <property type="match status" value="1"/>
</dbReference>
<dbReference type="NCBIfam" id="TIGR01364">
    <property type="entry name" value="serC_1"/>
    <property type="match status" value="1"/>
</dbReference>
<dbReference type="PANTHER" id="PTHR43247">
    <property type="entry name" value="PHOSPHOSERINE AMINOTRANSFERASE"/>
    <property type="match status" value="1"/>
</dbReference>
<dbReference type="PANTHER" id="PTHR43247:SF1">
    <property type="entry name" value="PHOSPHOSERINE AMINOTRANSFERASE"/>
    <property type="match status" value="1"/>
</dbReference>
<dbReference type="Pfam" id="PF00266">
    <property type="entry name" value="Aminotran_5"/>
    <property type="match status" value="1"/>
</dbReference>
<dbReference type="PIRSF" id="PIRSF000525">
    <property type="entry name" value="SerC"/>
    <property type="match status" value="1"/>
</dbReference>
<dbReference type="SUPFAM" id="SSF53383">
    <property type="entry name" value="PLP-dependent transferases"/>
    <property type="match status" value="1"/>
</dbReference>
<feature type="chain" id="PRO_0000150161" description="Phosphoserine aminotransferase">
    <location>
        <begin position="1"/>
        <end position="358"/>
    </location>
</feature>
<feature type="binding site" evidence="1">
    <location>
        <position position="41"/>
    </location>
    <ligand>
        <name>L-glutamate</name>
        <dbReference type="ChEBI" id="CHEBI:29985"/>
    </ligand>
</feature>
<feature type="binding site" evidence="1">
    <location>
        <begin position="75"/>
        <end position="76"/>
    </location>
    <ligand>
        <name>pyridoxal 5'-phosphate</name>
        <dbReference type="ChEBI" id="CHEBI:597326"/>
    </ligand>
</feature>
<feature type="binding site" evidence="1">
    <location>
        <position position="100"/>
    </location>
    <ligand>
        <name>pyridoxal 5'-phosphate</name>
        <dbReference type="ChEBI" id="CHEBI:597326"/>
    </ligand>
</feature>
<feature type="binding site" evidence="1">
    <location>
        <position position="148"/>
    </location>
    <ligand>
        <name>pyridoxal 5'-phosphate</name>
        <dbReference type="ChEBI" id="CHEBI:597326"/>
    </ligand>
</feature>
<feature type="binding site" evidence="1">
    <location>
        <position position="167"/>
    </location>
    <ligand>
        <name>pyridoxal 5'-phosphate</name>
        <dbReference type="ChEBI" id="CHEBI:597326"/>
    </ligand>
</feature>
<feature type="binding site" evidence="1">
    <location>
        <position position="190"/>
    </location>
    <ligand>
        <name>pyridoxal 5'-phosphate</name>
        <dbReference type="ChEBI" id="CHEBI:597326"/>
    </ligand>
</feature>
<feature type="binding site" evidence="1">
    <location>
        <begin position="233"/>
        <end position="234"/>
    </location>
    <ligand>
        <name>pyridoxal 5'-phosphate</name>
        <dbReference type="ChEBI" id="CHEBI:597326"/>
    </ligand>
</feature>
<feature type="modified residue" description="N6-(pyridoxal phosphate)lysine" evidence="1">
    <location>
        <position position="191"/>
    </location>
</feature>
<feature type="strand" evidence="2">
    <location>
        <begin position="8"/>
        <end position="10"/>
    </location>
</feature>
<feature type="helix" evidence="2">
    <location>
        <begin position="15"/>
        <end position="23"/>
    </location>
</feature>
<feature type="strand" evidence="2">
    <location>
        <begin position="25"/>
        <end position="27"/>
    </location>
</feature>
<feature type="helix" evidence="2">
    <location>
        <begin position="28"/>
        <end position="30"/>
    </location>
</feature>
<feature type="strand" evidence="2">
    <location>
        <begin position="31"/>
        <end position="33"/>
    </location>
</feature>
<feature type="helix" evidence="2">
    <location>
        <begin position="35"/>
        <end position="37"/>
    </location>
</feature>
<feature type="strand" evidence="2">
    <location>
        <begin position="40"/>
        <end position="42"/>
    </location>
</feature>
<feature type="helix" evidence="2">
    <location>
        <begin position="43"/>
        <end position="60"/>
    </location>
</feature>
<feature type="strand" evidence="2">
    <location>
        <begin position="66"/>
        <end position="73"/>
    </location>
</feature>
<feature type="helix" evidence="2">
    <location>
        <begin position="74"/>
        <end position="86"/>
    </location>
</feature>
<feature type="strand" evidence="2">
    <location>
        <begin position="92"/>
        <end position="96"/>
    </location>
</feature>
<feature type="helix" evidence="2">
    <location>
        <begin position="99"/>
        <end position="110"/>
    </location>
</feature>
<feature type="strand" evidence="2">
    <location>
        <begin position="115"/>
        <end position="120"/>
    </location>
</feature>
<feature type="turn" evidence="2">
    <location>
        <begin position="122"/>
        <end position="125"/>
    </location>
</feature>
<feature type="strand" evidence="2">
    <location>
        <begin position="138"/>
        <end position="147"/>
    </location>
</feature>
<feature type="turn" evidence="2">
    <location>
        <begin position="148"/>
        <end position="151"/>
    </location>
</feature>
<feature type="strand" evidence="2">
    <location>
        <begin position="164"/>
        <end position="167"/>
    </location>
</feature>
<feature type="helix" evidence="2">
    <location>
        <begin position="169"/>
        <end position="171"/>
    </location>
</feature>
<feature type="strand" evidence="2">
    <location>
        <begin position="182"/>
        <end position="188"/>
    </location>
</feature>
<feature type="turn" evidence="2">
    <location>
        <begin position="189"/>
        <end position="192"/>
    </location>
</feature>
<feature type="strand" evidence="2">
    <location>
        <begin position="199"/>
        <end position="204"/>
    </location>
</feature>
<feature type="helix" evidence="2">
    <location>
        <begin position="205"/>
        <end position="212"/>
    </location>
</feature>
<feature type="helix" evidence="2">
    <location>
        <begin position="218"/>
        <end position="220"/>
    </location>
</feature>
<feature type="helix" evidence="2">
    <location>
        <begin position="222"/>
        <end position="227"/>
    </location>
</feature>
<feature type="turn" evidence="2">
    <location>
        <begin position="228"/>
        <end position="230"/>
    </location>
</feature>
<feature type="helix" evidence="2">
    <location>
        <begin position="237"/>
        <end position="251"/>
    </location>
</feature>
<feature type="turn" evidence="2">
    <location>
        <begin position="252"/>
        <end position="254"/>
    </location>
</feature>
<feature type="helix" evidence="2">
    <location>
        <begin position="256"/>
        <end position="275"/>
    </location>
</feature>
<feature type="strand" evidence="2">
    <location>
        <begin position="280"/>
        <end position="285"/>
    </location>
</feature>
<feature type="helix" evidence="2">
    <location>
        <begin position="287"/>
        <end position="289"/>
    </location>
</feature>
<feature type="strand" evidence="2">
    <location>
        <begin position="292"/>
        <end position="301"/>
    </location>
</feature>
<feature type="helix" evidence="2">
    <location>
        <begin position="305"/>
        <end position="315"/>
    </location>
</feature>
<feature type="turn" evidence="2">
    <location>
        <begin position="325"/>
        <end position="327"/>
    </location>
</feature>
<feature type="strand" evidence="2">
    <location>
        <begin position="329"/>
        <end position="333"/>
    </location>
</feature>
<feature type="helix" evidence="2">
    <location>
        <begin position="340"/>
        <end position="357"/>
    </location>
</feature>
<accession>Q9PIH3</accession>
<accession>Q0PBI3</accession>
<protein>
    <recommendedName>
        <fullName evidence="1">Phosphoserine aminotransferase</fullName>
        <ecNumber evidence="1">2.6.1.52</ecNumber>
    </recommendedName>
    <alternativeName>
        <fullName evidence="1">Phosphohydroxythreonine aminotransferase</fullName>
        <shortName evidence="1">PSAT</shortName>
    </alternativeName>
</protein>
<evidence type="ECO:0000255" key="1">
    <source>
        <dbReference type="HAMAP-Rule" id="MF_00160"/>
    </source>
</evidence>
<evidence type="ECO:0007829" key="2">
    <source>
        <dbReference type="PDB" id="3M5U"/>
    </source>
</evidence>
<gene>
    <name evidence="1" type="primary">serC</name>
    <name type="ordered locus">Cj0326</name>
</gene>
<keyword id="KW-0002">3D-structure</keyword>
<keyword id="KW-0028">Amino-acid biosynthesis</keyword>
<keyword id="KW-0032">Aminotransferase</keyword>
<keyword id="KW-0963">Cytoplasm</keyword>
<keyword id="KW-0663">Pyridoxal phosphate</keyword>
<keyword id="KW-0664">Pyridoxine biosynthesis</keyword>
<keyword id="KW-1185">Reference proteome</keyword>
<keyword id="KW-0718">Serine biosynthesis</keyword>
<keyword id="KW-0808">Transferase</keyword>
<name>SERC_CAMJE</name>
<organism>
    <name type="scientific">Campylobacter jejuni subsp. jejuni serotype O:2 (strain ATCC 700819 / NCTC 11168)</name>
    <dbReference type="NCBI Taxonomy" id="192222"/>
    <lineage>
        <taxon>Bacteria</taxon>
        <taxon>Pseudomonadati</taxon>
        <taxon>Campylobacterota</taxon>
        <taxon>Epsilonproteobacteria</taxon>
        <taxon>Campylobacterales</taxon>
        <taxon>Campylobacteraceae</taxon>
        <taxon>Campylobacter</taxon>
    </lineage>
</organism>